<gene>
    <name evidence="1" type="primary">fluC</name>
    <name evidence="1" type="synonym">crcB</name>
    <name type="ordered locus">Msil_0975</name>
</gene>
<evidence type="ECO:0000255" key="1">
    <source>
        <dbReference type="HAMAP-Rule" id="MF_00454"/>
    </source>
</evidence>
<comment type="function">
    <text evidence="1">Fluoride-specific ion channel. Important for reducing fluoride concentration in the cell, thus reducing its toxicity.</text>
</comment>
<comment type="catalytic activity">
    <reaction evidence="1">
        <text>fluoride(in) = fluoride(out)</text>
        <dbReference type="Rhea" id="RHEA:76159"/>
        <dbReference type="ChEBI" id="CHEBI:17051"/>
    </reaction>
    <physiologicalReaction direction="left-to-right" evidence="1">
        <dbReference type="Rhea" id="RHEA:76160"/>
    </physiologicalReaction>
</comment>
<comment type="activity regulation">
    <text evidence="1">Na(+) is not transported, but it plays an essential structural role and its presence is essential for fluoride channel function.</text>
</comment>
<comment type="subcellular location">
    <subcellularLocation>
        <location evidence="1">Cell inner membrane</location>
        <topology evidence="1">Multi-pass membrane protein</topology>
    </subcellularLocation>
</comment>
<comment type="similarity">
    <text evidence="1">Belongs to the fluoride channel Fluc/FEX (TC 1.A.43) family.</text>
</comment>
<accession>B8EJZ7</accession>
<dbReference type="EMBL" id="CP001280">
    <property type="protein sequence ID" value="ACK49944.1"/>
    <property type="molecule type" value="Genomic_DNA"/>
</dbReference>
<dbReference type="SMR" id="B8EJZ7"/>
<dbReference type="STRING" id="395965.Msil_0975"/>
<dbReference type="KEGG" id="msl:Msil_0975"/>
<dbReference type="eggNOG" id="COG0239">
    <property type="taxonomic scope" value="Bacteria"/>
</dbReference>
<dbReference type="HOGENOM" id="CLU_114342_3_0_5"/>
<dbReference type="OrthoDB" id="9806299at2"/>
<dbReference type="Proteomes" id="UP000002257">
    <property type="component" value="Chromosome"/>
</dbReference>
<dbReference type="GO" id="GO:0005886">
    <property type="term" value="C:plasma membrane"/>
    <property type="evidence" value="ECO:0007669"/>
    <property type="project" value="UniProtKB-SubCell"/>
</dbReference>
<dbReference type="GO" id="GO:0062054">
    <property type="term" value="F:fluoride channel activity"/>
    <property type="evidence" value="ECO:0007669"/>
    <property type="project" value="UniProtKB-UniRule"/>
</dbReference>
<dbReference type="GO" id="GO:0046872">
    <property type="term" value="F:metal ion binding"/>
    <property type="evidence" value="ECO:0007669"/>
    <property type="project" value="UniProtKB-KW"/>
</dbReference>
<dbReference type="GO" id="GO:0140114">
    <property type="term" value="P:cellular detoxification of fluoride"/>
    <property type="evidence" value="ECO:0007669"/>
    <property type="project" value="UniProtKB-UniRule"/>
</dbReference>
<dbReference type="HAMAP" id="MF_00454">
    <property type="entry name" value="FluC"/>
    <property type="match status" value="1"/>
</dbReference>
<dbReference type="InterPro" id="IPR003691">
    <property type="entry name" value="FluC"/>
</dbReference>
<dbReference type="NCBIfam" id="TIGR00494">
    <property type="entry name" value="crcB"/>
    <property type="match status" value="1"/>
</dbReference>
<dbReference type="NCBIfam" id="NF010802">
    <property type="entry name" value="PRK14206.1"/>
    <property type="match status" value="1"/>
</dbReference>
<dbReference type="PANTHER" id="PTHR28259">
    <property type="entry name" value="FLUORIDE EXPORT PROTEIN 1-RELATED"/>
    <property type="match status" value="1"/>
</dbReference>
<dbReference type="PANTHER" id="PTHR28259:SF1">
    <property type="entry name" value="FLUORIDE EXPORT PROTEIN 1-RELATED"/>
    <property type="match status" value="1"/>
</dbReference>
<dbReference type="Pfam" id="PF02537">
    <property type="entry name" value="CRCB"/>
    <property type="match status" value="1"/>
</dbReference>
<proteinExistence type="inferred from homology"/>
<sequence>MDYLWIMIGSALGGAARFWVTGFVAEQTGGIFPWGTVLINVSGSFLIGFFGSLTGAEGRFVVGESARLFVMIGLCGGFTTFSSFSLQTLNLMRQGEMIRAGGNIALSVVFCLLAVWLGHVVAVAINQMKGA</sequence>
<reference key="1">
    <citation type="journal article" date="2010" name="J. Bacteriol.">
        <title>Complete genome sequence of the aerobic facultative methanotroph Methylocella silvestris BL2.</title>
        <authorList>
            <person name="Chen Y."/>
            <person name="Crombie A."/>
            <person name="Rahman M.T."/>
            <person name="Dedysh S.N."/>
            <person name="Liesack W."/>
            <person name="Stott M.B."/>
            <person name="Alam M."/>
            <person name="Theisen A.R."/>
            <person name="Murrell J.C."/>
            <person name="Dunfield P.F."/>
        </authorList>
    </citation>
    <scope>NUCLEOTIDE SEQUENCE [LARGE SCALE GENOMIC DNA]</scope>
    <source>
        <strain>DSM 15510 / CIP 108128 / LMG 27833 / NCIMB 13906 / BL2</strain>
    </source>
</reference>
<name>FLUC_METSB</name>
<feature type="chain" id="PRO_1000135324" description="Fluoride-specific ion channel FluC">
    <location>
        <begin position="1"/>
        <end position="131"/>
    </location>
</feature>
<feature type="transmembrane region" description="Helical" evidence="1">
    <location>
        <begin position="4"/>
        <end position="24"/>
    </location>
</feature>
<feature type="transmembrane region" description="Helical" evidence="1">
    <location>
        <begin position="30"/>
        <end position="50"/>
    </location>
</feature>
<feature type="transmembrane region" description="Helical" evidence="1">
    <location>
        <begin position="68"/>
        <end position="88"/>
    </location>
</feature>
<feature type="transmembrane region" description="Helical" evidence="1">
    <location>
        <begin position="104"/>
        <end position="124"/>
    </location>
</feature>
<feature type="binding site" evidence="1">
    <location>
        <position position="76"/>
    </location>
    <ligand>
        <name>Na(+)</name>
        <dbReference type="ChEBI" id="CHEBI:29101"/>
        <note>structural</note>
    </ligand>
</feature>
<feature type="binding site" evidence="1">
    <location>
        <position position="79"/>
    </location>
    <ligand>
        <name>Na(+)</name>
        <dbReference type="ChEBI" id="CHEBI:29101"/>
        <note>structural</note>
    </ligand>
</feature>
<organism>
    <name type="scientific">Methylocella silvestris (strain DSM 15510 / CIP 108128 / LMG 27833 / NCIMB 13906 / BL2)</name>
    <dbReference type="NCBI Taxonomy" id="395965"/>
    <lineage>
        <taxon>Bacteria</taxon>
        <taxon>Pseudomonadati</taxon>
        <taxon>Pseudomonadota</taxon>
        <taxon>Alphaproteobacteria</taxon>
        <taxon>Hyphomicrobiales</taxon>
        <taxon>Beijerinckiaceae</taxon>
        <taxon>Methylocella</taxon>
    </lineage>
</organism>
<protein>
    <recommendedName>
        <fullName evidence="1">Fluoride-specific ion channel FluC</fullName>
    </recommendedName>
</protein>
<keyword id="KW-0997">Cell inner membrane</keyword>
<keyword id="KW-1003">Cell membrane</keyword>
<keyword id="KW-0407">Ion channel</keyword>
<keyword id="KW-0406">Ion transport</keyword>
<keyword id="KW-0472">Membrane</keyword>
<keyword id="KW-0479">Metal-binding</keyword>
<keyword id="KW-1185">Reference proteome</keyword>
<keyword id="KW-0915">Sodium</keyword>
<keyword id="KW-0812">Transmembrane</keyword>
<keyword id="KW-1133">Transmembrane helix</keyword>
<keyword id="KW-0813">Transport</keyword>